<organism>
    <name type="scientific">Xanthomonas campestris pv. campestris (strain ATCC 33913 / DSM 3586 / NCPPB 528 / LMG 568 / P 25)</name>
    <dbReference type="NCBI Taxonomy" id="190485"/>
    <lineage>
        <taxon>Bacteria</taxon>
        <taxon>Pseudomonadati</taxon>
        <taxon>Pseudomonadota</taxon>
        <taxon>Gammaproteobacteria</taxon>
        <taxon>Lysobacterales</taxon>
        <taxon>Lysobacteraceae</taxon>
        <taxon>Xanthomonas</taxon>
    </lineage>
</organism>
<keyword id="KW-0028">Amino-acid biosynthesis</keyword>
<keyword id="KW-0963">Cytoplasm</keyword>
<keyword id="KW-0368">Histidine biosynthesis</keyword>
<keyword id="KW-0413">Isomerase</keyword>
<keyword id="KW-1185">Reference proteome</keyword>
<dbReference type="EC" id="5.3.1.16" evidence="1"/>
<dbReference type="EMBL" id="AE008922">
    <property type="protein sequence ID" value="AAM41102.1"/>
    <property type="molecule type" value="Genomic_DNA"/>
</dbReference>
<dbReference type="RefSeq" id="NP_637178.1">
    <property type="nucleotide sequence ID" value="NC_003902.1"/>
</dbReference>
<dbReference type="RefSeq" id="WP_011036983.1">
    <property type="nucleotide sequence ID" value="NC_003902.1"/>
</dbReference>
<dbReference type="SMR" id="Q8P9P0"/>
<dbReference type="STRING" id="190485.XCC1813"/>
<dbReference type="EnsemblBacteria" id="AAM41102">
    <property type="protein sequence ID" value="AAM41102"/>
    <property type="gene ID" value="XCC1813"/>
</dbReference>
<dbReference type="KEGG" id="xcc:XCC1813"/>
<dbReference type="PATRIC" id="fig|190485.4.peg.1933"/>
<dbReference type="eggNOG" id="COG0106">
    <property type="taxonomic scope" value="Bacteria"/>
</dbReference>
<dbReference type="HOGENOM" id="CLU_048577_1_2_6"/>
<dbReference type="OrthoDB" id="9807749at2"/>
<dbReference type="UniPathway" id="UPA00031">
    <property type="reaction ID" value="UER00009"/>
</dbReference>
<dbReference type="Proteomes" id="UP000001010">
    <property type="component" value="Chromosome"/>
</dbReference>
<dbReference type="GO" id="GO:0005737">
    <property type="term" value="C:cytoplasm"/>
    <property type="evidence" value="ECO:0000318"/>
    <property type="project" value="GO_Central"/>
</dbReference>
<dbReference type="GO" id="GO:0003949">
    <property type="term" value="F:1-(5-phosphoribosyl)-5-[(5-phosphoribosylamino)methylideneamino]imidazole-4-carboxamide isomerase activity"/>
    <property type="evidence" value="ECO:0000318"/>
    <property type="project" value="GO_Central"/>
</dbReference>
<dbReference type="GO" id="GO:0000105">
    <property type="term" value="P:L-histidine biosynthetic process"/>
    <property type="evidence" value="ECO:0000318"/>
    <property type="project" value="GO_Central"/>
</dbReference>
<dbReference type="CDD" id="cd04732">
    <property type="entry name" value="HisA"/>
    <property type="match status" value="1"/>
</dbReference>
<dbReference type="FunFam" id="3.20.20.70:FF:000009">
    <property type="entry name" value="1-(5-phosphoribosyl)-5-[(5-phosphoribosylamino)methylideneamino] imidazole-4-carboxamide isomerase"/>
    <property type="match status" value="1"/>
</dbReference>
<dbReference type="Gene3D" id="3.20.20.70">
    <property type="entry name" value="Aldolase class I"/>
    <property type="match status" value="1"/>
</dbReference>
<dbReference type="HAMAP" id="MF_01014">
    <property type="entry name" value="HisA"/>
    <property type="match status" value="1"/>
</dbReference>
<dbReference type="InterPro" id="IPR013785">
    <property type="entry name" value="Aldolase_TIM"/>
</dbReference>
<dbReference type="InterPro" id="IPR006062">
    <property type="entry name" value="His_biosynth"/>
</dbReference>
<dbReference type="InterPro" id="IPR006063">
    <property type="entry name" value="HisA_bact_arch"/>
</dbReference>
<dbReference type="InterPro" id="IPR044524">
    <property type="entry name" value="Isoase_HisA-like"/>
</dbReference>
<dbReference type="InterPro" id="IPR023016">
    <property type="entry name" value="Isoase_HisA-like_bact"/>
</dbReference>
<dbReference type="InterPro" id="IPR011060">
    <property type="entry name" value="RibuloseP-bd_barrel"/>
</dbReference>
<dbReference type="NCBIfam" id="TIGR00007">
    <property type="entry name" value="1-(5-phosphoribosyl)-5-[(5-phosphoribosylamino)methylideneamino]imidazole-4-carboxamide isomerase"/>
    <property type="match status" value="1"/>
</dbReference>
<dbReference type="PANTHER" id="PTHR43090">
    <property type="entry name" value="1-(5-PHOSPHORIBOSYL)-5-[(5-PHOSPHORIBOSYLAMINO)METHYLIDENEAMINO] IMIDAZOLE-4-CARBOXAMIDE ISOMERASE"/>
    <property type="match status" value="1"/>
</dbReference>
<dbReference type="PANTHER" id="PTHR43090:SF2">
    <property type="entry name" value="1-(5-PHOSPHORIBOSYL)-5-[(5-PHOSPHORIBOSYLAMINO)METHYLIDENEAMINO] IMIDAZOLE-4-CARBOXAMIDE ISOMERASE"/>
    <property type="match status" value="1"/>
</dbReference>
<dbReference type="Pfam" id="PF00977">
    <property type="entry name" value="His_biosynth"/>
    <property type="match status" value="1"/>
</dbReference>
<dbReference type="SUPFAM" id="SSF51366">
    <property type="entry name" value="Ribulose-phoshate binding barrel"/>
    <property type="match status" value="1"/>
</dbReference>
<sequence>MSFTVYPALDIRDGRVVRLLQGDYARETRYGDDVLPRAQAFADAGAQWMHLVDLDAAKAGGYTLAALLGQISRQTGLQVQTGGGVRSREDVARILDAGAARVVVGSLAVRDSATVIGWLQEFGTDRLTIALDTRQDAAGVWQLPVHGWTETAEATLDQLATQYAQAGLQHLLCTDIARDGMLSGPNMGLYAHLRALAPQLQVQVSGGARNLADVAAAKAAGCAGIVLGKALLEGHLDLKDALAC</sequence>
<protein>
    <recommendedName>
        <fullName evidence="1">1-(5-phosphoribosyl)-5-[(5-phosphoribosylamino)methylideneamino] imidazole-4-carboxamide isomerase</fullName>
        <ecNumber evidence="1">5.3.1.16</ecNumber>
    </recommendedName>
    <alternativeName>
        <fullName evidence="1">Phosphoribosylformimino-5-aminoimidazole carboxamide ribotide isomerase</fullName>
    </alternativeName>
</protein>
<gene>
    <name evidence="1" type="primary">hisA</name>
    <name type="ordered locus">XCC1813</name>
</gene>
<feature type="chain" id="PRO_0000142077" description="1-(5-phosphoribosyl)-5-[(5-phosphoribosylamino)methylideneamino] imidazole-4-carboxamide isomerase">
    <location>
        <begin position="1"/>
        <end position="244"/>
    </location>
</feature>
<feature type="active site" description="Proton acceptor" evidence="1">
    <location>
        <position position="10"/>
    </location>
</feature>
<feature type="active site" description="Proton donor" evidence="1">
    <location>
        <position position="132"/>
    </location>
</feature>
<reference key="1">
    <citation type="journal article" date="2002" name="Nature">
        <title>Comparison of the genomes of two Xanthomonas pathogens with differing host specificities.</title>
        <authorList>
            <person name="da Silva A.C.R."/>
            <person name="Ferro J.A."/>
            <person name="Reinach F.C."/>
            <person name="Farah C.S."/>
            <person name="Furlan L.R."/>
            <person name="Quaggio R.B."/>
            <person name="Monteiro-Vitorello C.B."/>
            <person name="Van Sluys M.A."/>
            <person name="Almeida N.F. Jr."/>
            <person name="Alves L.M.C."/>
            <person name="do Amaral A.M."/>
            <person name="Bertolini M.C."/>
            <person name="Camargo L.E.A."/>
            <person name="Camarotte G."/>
            <person name="Cannavan F."/>
            <person name="Cardozo J."/>
            <person name="Chambergo F."/>
            <person name="Ciapina L.P."/>
            <person name="Cicarelli R.M.B."/>
            <person name="Coutinho L.L."/>
            <person name="Cursino-Santos J.R."/>
            <person name="El-Dorry H."/>
            <person name="Faria J.B."/>
            <person name="Ferreira A.J.S."/>
            <person name="Ferreira R.C.C."/>
            <person name="Ferro M.I.T."/>
            <person name="Formighieri E.F."/>
            <person name="Franco M.C."/>
            <person name="Greggio C.C."/>
            <person name="Gruber A."/>
            <person name="Katsuyama A.M."/>
            <person name="Kishi L.T."/>
            <person name="Leite R.P."/>
            <person name="Lemos E.G.M."/>
            <person name="Lemos M.V.F."/>
            <person name="Locali E.C."/>
            <person name="Machado M.A."/>
            <person name="Madeira A.M.B.N."/>
            <person name="Martinez-Rossi N.M."/>
            <person name="Martins E.C."/>
            <person name="Meidanis J."/>
            <person name="Menck C.F.M."/>
            <person name="Miyaki C.Y."/>
            <person name="Moon D.H."/>
            <person name="Moreira L.M."/>
            <person name="Novo M.T.M."/>
            <person name="Okura V.K."/>
            <person name="Oliveira M.C."/>
            <person name="Oliveira V.R."/>
            <person name="Pereira H.A."/>
            <person name="Rossi A."/>
            <person name="Sena J.A.D."/>
            <person name="Silva C."/>
            <person name="de Souza R.F."/>
            <person name="Spinola L.A.F."/>
            <person name="Takita M.A."/>
            <person name="Tamura R.E."/>
            <person name="Teixeira E.C."/>
            <person name="Tezza R.I.D."/>
            <person name="Trindade dos Santos M."/>
            <person name="Truffi D."/>
            <person name="Tsai S.M."/>
            <person name="White F.F."/>
            <person name="Setubal J.C."/>
            <person name="Kitajima J.P."/>
        </authorList>
    </citation>
    <scope>NUCLEOTIDE SEQUENCE [LARGE SCALE GENOMIC DNA]</scope>
    <source>
        <strain>ATCC 33913 / DSM 3586 / NCPPB 528 / LMG 568 / P 25</strain>
    </source>
</reference>
<proteinExistence type="inferred from homology"/>
<name>HIS4_XANCP</name>
<comment type="catalytic activity">
    <reaction evidence="1">
        <text>1-(5-phospho-beta-D-ribosyl)-5-[(5-phospho-beta-D-ribosylamino)methylideneamino]imidazole-4-carboxamide = 5-[(5-phospho-1-deoxy-D-ribulos-1-ylimino)methylamino]-1-(5-phospho-beta-D-ribosyl)imidazole-4-carboxamide</text>
        <dbReference type="Rhea" id="RHEA:15469"/>
        <dbReference type="ChEBI" id="CHEBI:58435"/>
        <dbReference type="ChEBI" id="CHEBI:58525"/>
        <dbReference type="EC" id="5.3.1.16"/>
    </reaction>
</comment>
<comment type="pathway">
    <text evidence="1">Amino-acid biosynthesis; L-histidine biosynthesis; L-histidine from 5-phospho-alpha-D-ribose 1-diphosphate: step 4/9.</text>
</comment>
<comment type="subcellular location">
    <subcellularLocation>
        <location evidence="1">Cytoplasm</location>
    </subcellularLocation>
</comment>
<comment type="similarity">
    <text evidence="1">Belongs to the HisA/HisF family.</text>
</comment>
<accession>Q8P9P0</accession>
<evidence type="ECO:0000255" key="1">
    <source>
        <dbReference type="HAMAP-Rule" id="MF_01014"/>
    </source>
</evidence>